<protein>
    <recommendedName>
        <fullName evidence="1">S-adenosylmethionine synthase</fullName>
        <shortName evidence="1">AdoMet synthase</shortName>
        <ecNumber evidence="1">2.5.1.6</ecNumber>
    </recommendedName>
    <alternativeName>
        <fullName evidence="1">MAT</fullName>
    </alternativeName>
    <alternativeName>
        <fullName evidence="1">Methionine adenosyltransferase</fullName>
    </alternativeName>
</protein>
<sequence>MTHTTLFTSESVSEGHPDKVADQISDAVLDALIGQDPNCRVACEAVVKSGMVFVAGEITTNAWADVEQITRNTVLQIGYNDPHLGFDGETCAVVTAIGKQSPDIVMGVDGREDQELGAGDQGLMFGYASRETDVFMPAPITYAHRLVRQQALLRKNGRLPWLRPDAKSQVTLRYENGKPVAADCIVLSTQHSPEISQESLREAVIDEIIKPIMPPHWLDKHTRFLVNPTGRFVIGGPVGDCGLTGRKIIVDTYGGMARHGGGCFSGKDPSKVDRSGAYAARYVAKNIVAGGLADRCEIQVSYAIGVAEPTSISVETFGTGKIDEVRIQQLIKEHFDLRPGKIIEELNLLRSIYKATATYGHFGREEPEFTWERTDKAEILREAAGLAAANVTN</sequence>
<comment type="function">
    <text evidence="1">Catalyzes the formation of S-adenosylmethionine (AdoMet) from methionine and ATP. The overall synthetic reaction is composed of two sequential steps, AdoMet formation and the subsequent tripolyphosphate hydrolysis which occurs prior to release of AdoMet from the enzyme.</text>
</comment>
<comment type="catalytic activity">
    <reaction evidence="1">
        <text>L-methionine + ATP + H2O = S-adenosyl-L-methionine + phosphate + diphosphate</text>
        <dbReference type="Rhea" id="RHEA:21080"/>
        <dbReference type="ChEBI" id="CHEBI:15377"/>
        <dbReference type="ChEBI" id="CHEBI:30616"/>
        <dbReference type="ChEBI" id="CHEBI:33019"/>
        <dbReference type="ChEBI" id="CHEBI:43474"/>
        <dbReference type="ChEBI" id="CHEBI:57844"/>
        <dbReference type="ChEBI" id="CHEBI:59789"/>
        <dbReference type="EC" id="2.5.1.6"/>
    </reaction>
</comment>
<comment type="cofactor">
    <cofactor evidence="1">
        <name>Mg(2+)</name>
        <dbReference type="ChEBI" id="CHEBI:18420"/>
    </cofactor>
    <text evidence="1">Binds 2 divalent ions per subunit.</text>
</comment>
<comment type="cofactor">
    <cofactor evidence="1">
        <name>K(+)</name>
        <dbReference type="ChEBI" id="CHEBI:29103"/>
    </cofactor>
    <text evidence="1">Binds 1 potassium ion per subunit.</text>
</comment>
<comment type="pathway">
    <text evidence="1">Amino-acid biosynthesis; S-adenosyl-L-methionine biosynthesis; S-adenosyl-L-methionine from L-methionine: step 1/1.</text>
</comment>
<comment type="subunit">
    <text evidence="1">Homotetramer; dimer of dimers.</text>
</comment>
<comment type="subcellular location">
    <subcellularLocation>
        <location evidence="1">Cytoplasm</location>
    </subcellularLocation>
</comment>
<comment type="similarity">
    <text evidence="1">Belongs to the AdoMet synthase family.</text>
</comment>
<feature type="chain" id="PRO_1000075371" description="S-adenosylmethionine synthase">
    <location>
        <begin position="1"/>
        <end position="393"/>
    </location>
</feature>
<feature type="region of interest" description="Flexible loop" evidence="1">
    <location>
        <begin position="100"/>
        <end position="110"/>
    </location>
</feature>
<feature type="binding site" description="in other chain" evidence="1">
    <location>
        <position position="16"/>
    </location>
    <ligand>
        <name>ATP</name>
        <dbReference type="ChEBI" id="CHEBI:30616"/>
        <note>ligand shared between two neighboring subunits</note>
    </ligand>
</feature>
<feature type="binding site" evidence="1">
    <location>
        <position position="18"/>
    </location>
    <ligand>
        <name>Mg(2+)</name>
        <dbReference type="ChEBI" id="CHEBI:18420"/>
    </ligand>
</feature>
<feature type="binding site" evidence="1">
    <location>
        <position position="44"/>
    </location>
    <ligand>
        <name>K(+)</name>
        <dbReference type="ChEBI" id="CHEBI:29103"/>
    </ligand>
</feature>
<feature type="binding site" description="in other chain" evidence="1">
    <location>
        <position position="57"/>
    </location>
    <ligand>
        <name>L-methionine</name>
        <dbReference type="ChEBI" id="CHEBI:57844"/>
        <note>ligand shared between two neighboring subunits</note>
    </ligand>
</feature>
<feature type="binding site" description="in other chain" evidence="1">
    <location>
        <position position="100"/>
    </location>
    <ligand>
        <name>L-methionine</name>
        <dbReference type="ChEBI" id="CHEBI:57844"/>
        <note>ligand shared between two neighboring subunits</note>
    </ligand>
</feature>
<feature type="binding site" description="in other chain" evidence="1">
    <location>
        <begin position="165"/>
        <end position="167"/>
    </location>
    <ligand>
        <name>ATP</name>
        <dbReference type="ChEBI" id="CHEBI:30616"/>
        <note>ligand shared between two neighboring subunits</note>
    </ligand>
</feature>
<feature type="binding site" description="in other chain" evidence="1">
    <location>
        <begin position="231"/>
        <end position="232"/>
    </location>
    <ligand>
        <name>ATP</name>
        <dbReference type="ChEBI" id="CHEBI:30616"/>
        <note>ligand shared between two neighboring subunits</note>
    </ligand>
</feature>
<feature type="binding site" evidence="1">
    <location>
        <position position="240"/>
    </location>
    <ligand>
        <name>ATP</name>
        <dbReference type="ChEBI" id="CHEBI:30616"/>
        <note>ligand shared between two neighboring subunits</note>
    </ligand>
</feature>
<feature type="binding site" evidence="1">
    <location>
        <position position="240"/>
    </location>
    <ligand>
        <name>L-methionine</name>
        <dbReference type="ChEBI" id="CHEBI:57844"/>
        <note>ligand shared between two neighboring subunits</note>
    </ligand>
</feature>
<feature type="binding site" description="in other chain" evidence="1">
    <location>
        <begin position="246"/>
        <end position="247"/>
    </location>
    <ligand>
        <name>ATP</name>
        <dbReference type="ChEBI" id="CHEBI:30616"/>
        <note>ligand shared between two neighboring subunits</note>
    </ligand>
</feature>
<feature type="binding site" evidence="1">
    <location>
        <position position="267"/>
    </location>
    <ligand>
        <name>ATP</name>
        <dbReference type="ChEBI" id="CHEBI:30616"/>
        <note>ligand shared between two neighboring subunits</note>
    </ligand>
</feature>
<feature type="binding site" description="in other chain" evidence="1">
    <location>
        <position position="271"/>
    </location>
    <ligand>
        <name>L-methionine</name>
        <dbReference type="ChEBI" id="CHEBI:57844"/>
        <note>ligand shared between two neighboring subunits</note>
    </ligand>
</feature>
<organism>
    <name type="scientific">Coxiella burnetii (strain RSA 331 / Henzerling II)</name>
    <dbReference type="NCBI Taxonomy" id="360115"/>
    <lineage>
        <taxon>Bacteria</taxon>
        <taxon>Pseudomonadati</taxon>
        <taxon>Pseudomonadota</taxon>
        <taxon>Gammaproteobacteria</taxon>
        <taxon>Legionellales</taxon>
        <taxon>Coxiellaceae</taxon>
        <taxon>Coxiella</taxon>
    </lineage>
</organism>
<gene>
    <name evidence="1" type="primary">metK</name>
    <name type="ordered locus">COXBURSA331_A0053</name>
</gene>
<name>METK_COXBR</name>
<evidence type="ECO:0000255" key="1">
    <source>
        <dbReference type="HAMAP-Rule" id="MF_00086"/>
    </source>
</evidence>
<dbReference type="EC" id="2.5.1.6" evidence="1"/>
<dbReference type="EMBL" id="CP000890">
    <property type="protein sequence ID" value="ABX78910.1"/>
    <property type="molecule type" value="Genomic_DNA"/>
</dbReference>
<dbReference type="RefSeq" id="WP_005772164.1">
    <property type="nucleotide sequence ID" value="NC_010117.1"/>
</dbReference>
<dbReference type="SMR" id="A9N9E2"/>
<dbReference type="KEGG" id="cbs:COXBURSA331_A0053"/>
<dbReference type="HOGENOM" id="CLU_041802_1_1_6"/>
<dbReference type="UniPathway" id="UPA00315">
    <property type="reaction ID" value="UER00080"/>
</dbReference>
<dbReference type="GO" id="GO:0005737">
    <property type="term" value="C:cytoplasm"/>
    <property type="evidence" value="ECO:0007669"/>
    <property type="project" value="UniProtKB-SubCell"/>
</dbReference>
<dbReference type="GO" id="GO:0005524">
    <property type="term" value="F:ATP binding"/>
    <property type="evidence" value="ECO:0007669"/>
    <property type="project" value="UniProtKB-UniRule"/>
</dbReference>
<dbReference type="GO" id="GO:0000287">
    <property type="term" value="F:magnesium ion binding"/>
    <property type="evidence" value="ECO:0007669"/>
    <property type="project" value="UniProtKB-UniRule"/>
</dbReference>
<dbReference type="GO" id="GO:0004478">
    <property type="term" value="F:methionine adenosyltransferase activity"/>
    <property type="evidence" value="ECO:0007669"/>
    <property type="project" value="UniProtKB-UniRule"/>
</dbReference>
<dbReference type="GO" id="GO:0006730">
    <property type="term" value="P:one-carbon metabolic process"/>
    <property type="evidence" value="ECO:0007669"/>
    <property type="project" value="UniProtKB-KW"/>
</dbReference>
<dbReference type="GO" id="GO:0006556">
    <property type="term" value="P:S-adenosylmethionine biosynthetic process"/>
    <property type="evidence" value="ECO:0007669"/>
    <property type="project" value="UniProtKB-UniRule"/>
</dbReference>
<dbReference type="CDD" id="cd18079">
    <property type="entry name" value="S-AdoMet_synt"/>
    <property type="match status" value="1"/>
</dbReference>
<dbReference type="FunFam" id="3.30.300.10:FF:000003">
    <property type="entry name" value="S-adenosylmethionine synthase"/>
    <property type="match status" value="1"/>
</dbReference>
<dbReference type="FunFam" id="3.30.300.10:FF:000004">
    <property type="entry name" value="S-adenosylmethionine synthase"/>
    <property type="match status" value="1"/>
</dbReference>
<dbReference type="Gene3D" id="3.30.300.10">
    <property type="match status" value="3"/>
</dbReference>
<dbReference type="HAMAP" id="MF_00086">
    <property type="entry name" value="S_AdoMet_synth1"/>
    <property type="match status" value="1"/>
</dbReference>
<dbReference type="InterPro" id="IPR022631">
    <property type="entry name" value="ADOMET_SYNTHASE_CS"/>
</dbReference>
<dbReference type="InterPro" id="IPR022630">
    <property type="entry name" value="S-AdoMet_synt_C"/>
</dbReference>
<dbReference type="InterPro" id="IPR022629">
    <property type="entry name" value="S-AdoMet_synt_central"/>
</dbReference>
<dbReference type="InterPro" id="IPR022628">
    <property type="entry name" value="S-AdoMet_synt_N"/>
</dbReference>
<dbReference type="InterPro" id="IPR002133">
    <property type="entry name" value="S-AdoMet_synthetase"/>
</dbReference>
<dbReference type="InterPro" id="IPR022636">
    <property type="entry name" value="S-AdoMet_synthetase_sfam"/>
</dbReference>
<dbReference type="NCBIfam" id="TIGR01034">
    <property type="entry name" value="metK"/>
    <property type="match status" value="1"/>
</dbReference>
<dbReference type="PANTHER" id="PTHR11964">
    <property type="entry name" value="S-ADENOSYLMETHIONINE SYNTHETASE"/>
    <property type="match status" value="1"/>
</dbReference>
<dbReference type="Pfam" id="PF02773">
    <property type="entry name" value="S-AdoMet_synt_C"/>
    <property type="match status" value="1"/>
</dbReference>
<dbReference type="Pfam" id="PF02772">
    <property type="entry name" value="S-AdoMet_synt_M"/>
    <property type="match status" value="1"/>
</dbReference>
<dbReference type="Pfam" id="PF00438">
    <property type="entry name" value="S-AdoMet_synt_N"/>
    <property type="match status" value="1"/>
</dbReference>
<dbReference type="PIRSF" id="PIRSF000497">
    <property type="entry name" value="MAT"/>
    <property type="match status" value="1"/>
</dbReference>
<dbReference type="SUPFAM" id="SSF55973">
    <property type="entry name" value="S-adenosylmethionine synthetase"/>
    <property type="match status" value="3"/>
</dbReference>
<dbReference type="PROSITE" id="PS00376">
    <property type="entry name" value="ADOMET_SYNTHASE_1"/>
    <property type="match status" value="1"/>
</dbReference>
<dbReference type="PROSITE" id="PS00377">
    <property type="entry name" value="ADOMET_SYNTHASE_2"/>
    <property type="match status" value="1"/>
</dbReference>
<reference key="1">
    <citation type="submission" date="2007-11" db="EMBL/GenBank/DDBJ databases">
        <title>Genome sequencing of phylogenetically and phenotypically diverse Coxiella burnetii isolates.</title>
        <authorList>
            <person name="Seshadri R."/>
            <person name="Samuel J.E."/>
        </authorList>
    </citation>
    <scope>NUCLEOTIDE SEQUENCE [LARGE SCALE GENOMIC DNA]</scope>
    <source>
        <strain>RSA 331 / Henzerling II</strain>
    </source>
</reference>
<accession>A9N9E2</accession>
<keyword id="KW-0067">ATP-binding</keyword>
<keyword id="KW-0963">Cytoplasm</keyword>
<keyword id="KW-0460">Magnesium</keyword>
<keyword id="KW-0479">Metal-binding</keyword>
<keyword id="KW-0547">Nucleotide-binding</keyword>
<keyword id="KW-0554">One-carbon metabolism</keyword>
<keyword id="KW-0630">Potassium</keyword>
<keyword id="KW-0808">Transferase</keyword>
<proteinExistence type="inferred from homology"/>